<protein>
    <recommendedName>
        <fullName>DNA translocase FtsK</fullName>
    </recommendedName>
</protein>
<keyword id="KW-0067">ATP-binding</keyword>
<keyword id="KW-0131">Cell cycle</keyword>
<keyword id="KW-0132">Cell division</keyword>
<keyword id="KW-0997">Cell inner membrane</keyword>
<keyword id="KW-1003">Cell membrane</keyword>
<keyword id="KW-0159">Chromosome partition</keyword>
<keyword id="KW-0238">DNA-binding</keyword>
<keyword id="KW-0472">Membrane</keyword>
<keyword id="KW-0547">Nucleotide-binding</keyword>
<keyword id="KW-0812">Transmembrane</keyword>
<keyword id="KW-1133">Transmembrane helix</keyword>
<name>FTSK_BRUSU</name>
<feature type="chain" id="PRO_0000098244" description="DNA translocase FtsK">
    <location>
        <begin position="1"/>
        <end position="854"/>
    </location>
</feature>
<feature type="transmembrane region" description="Helical" evidence="2">
    <location>
        <begin position="31"/>
        <end position="51"/>
    </location>
</feature>
<feature type="transmembrane region" description="Helical" evidence="2">
    <location>
        <begin position="87"/>
        <end position="107"/>
    </location>
</feature>
<feature type="transmembrane region" description="Helical" evidence="2">
    <location>
        <begin position="118"/>
        <end position="138"/>
    </location>
</feature>
<feature type="transmembrane region" description="Helical" evidence="2">
    <location>
        <begin position="145"/>
        <end position="165"/>
    </location>
</feature>
<feature type="transmembrane region" description="Helical" evidence="2">
    <location>
        <begin position="174"/>
        <end position="194"/>
    </location>
</feature>
<feature type="transmembrane region" description="Helical" evidence="2">
    <location>
        <begin position="226"/>
        <end position="246"/>
    </location>
</feature>
<feature type="topological domain" description="Cytoplasmic" evidence="2">
    <location>
        <begin position="247"/>
        <end position="854"/>
    </location>
</feature>
<feature type="domain" description="FtsK" evidence="3">
    <location>
        <begin position="489"/>
        <end position="708"/>
    </location>
</feature>
<feature type="region of interest" description="Disordered" evidence="4">
    <location>
        <begin position="252"/>
        <end position="341"/>
    </location>
</feature>
<feature type="region of interest" description="Disordered" evidence="4">
    <location>
        <begin position="768"/>
        <end position="790"/>
    </location>
</feature>
<feature type="compositionally biased region" description="Basic and acidic residues" evidence="4">
    <location>
        <begin position="264"/>
        <end position="282"/>
    </location>
</feature>
<feature type="compositionally biased region" description="Acidic residues" evidence="4">
    <location>
        <begin position="289"/>
        <end position="302"/>
    </location>
</feature>
<feature type="binding site" evidence="3">
    <location>
        <begin position="509"/>
        <end position="514"/>
    </location>
    <ligand>
        <name>ATP</name>
        <dbReference type="ChEBI" id="CHEBI:30616"/>
    </ligand>
</feature>
<gene>
    <name type="primary">ftsK</name>
    <name type="ordered locus">BS1330_I1889</name>
    <name type="ordered locus">BR1895</name>
</gene>
<organism>
    <name type="scientific">Brucella suis biovar 1 (strain 1330)</name>
    <dbReference type="NCBI Taxonomy" id="204722"/>
    <lineage>
        <taxon>Bacteria</taxon>
        <taxon>Pseudomonadati</taxon>
        <taxon>Pseudomonadota</taxon>
        <taxon>Alphaproteobacteria</taxon>
        <taxon>Hyphomicrobiales</taxon>
        <taxon>Brucellaceae</taxon>
        <taxon>Brucella/Ochrobactrum group</taxon>
        <taxon>Brucella</taxon>
    </lineage>
</organism>
<sequence>MRQGYSPSYPLRDERITEDRLRFANLVRRQVYILLGLGLLSLTAMAVGALATWNVADPSFSHATDNPVTNALGYPGAVFSDLAMQFFGLASVPALLPLAVWSLLLMIRGYIGRIARRSLAWVGAALLFAAIASCLAVPQSWPMPIGLGGVFGDMLLRIPGFFLGGFPQGAIASAIALVLAFPALWFCFFASGIIGRGAEAVNPAMLSANRSADDEFADEDADNEAGGGFHFIGALTHLVLMTTATIRRMTGLGRRRSREDDFDDMRMVRRSAETRNAPRREPGFGAPAADDEPPFDMDDMDDGAPLAGQEWHDAPPPRARKARVEQAAPSPKPGPRAQREAQPSFLKDNGIFEMPSLHFLAEPKLVQRDPALSKDALEQNARLLEGVLEDFGVRGEIINVKPGPVVTLYELEPAPGIKSSRVIGLADDIARSMSAIAARVAVIPGRNAIGIELPNPKREMVYLREMLASRDFEQSKAKLALALGKTINGEPVIADIAKMPHVLVAGTTGSGKSVAINTMILSLLYRMTPQECRLIMIDPKMLELSVYDGIPHLLTPVVTDPKKAVVALKWTVREMEDRYRKMSKVGVRNIDGFNQRVGLAQKKGEPIARTVQTGFDRNTGEAIYETEELDLEPMPYIVVIIDEMADLMMVAGKDIEGAVQRLAQMARAAGIHVIMATQRPSVDVITGTIKANFPTRISFQVTSKIDSRTILGEQGAEQLLGQGDMLFMAGGGRIQRVHGPFVGDDEVERIVQHLKLQGVPEYLDAITEDEDDDEGGSGPAGTGNLEDSDDPYDQAVAVVLRDKKASTSYIQRRLGIGYNRAASIIERMEDEGIVGPANHAGKREILVPTGDDDF</sequence>
<accession>Q8FYI0</accession>
<accession>G0K839</accession>
<proteinExistence type="inferred from homology"/>
<evidence type="ECO:0000250" key="1"/>
<evidence type="ECO:0000255" key="2"/>
<evidence type="ECO:0000255" key="3">
    <source>
        <dbReference type="PROSITE-ProRule" id="PRU00289"/>
    </source>
</evidence>
<evidence type="ECO:0000256" key="4">
    <source>
        <dbReference type="SAM" id="MobiDB-lite"/>
    </source>
</evidence>
<evidence type="ECO:0000305" key="5"/>
<comment type="function">
    <text evidence="1">Essential cell division protein that coordinates cell division and chromosome segregation. The N-terminus is involved in assembly of the cell-division machinery. The C-terminus functions as a DNA motor that moves dsDNA in an ATP-dependent manner towards the dif recombination site, which is located within the replication terminus region. Translocation stops specifically at Xer-dif sites, where FtsK interacts with the Xer recombinase, allowing activation of chromosome unlinking by recombination. FtsK orienting polar sequences (KOPS) guide the direction of DNA translocation. FtsK can remove proteins from DNA as it translocates, but translocation stops specifically at XerCD-dif site, thereby preventing removal of XerC and XerD from dif (By similarity).</text>
</comment>
<comment type="subunit">
    <text evidence="1">Homohexamer. Forms a ring that surrounds DNA (By similarity).</text>
</comment>
<comment type="subcellular location">
    <subcellularLocation>
        <location evidence="1">Cell inner membrane</location>
        <topology evidence="1">Multi-pass membrane protein</topology>
    </subcellularLocation>
    <text evidence="1">Located at the septum.</text>
</comment>
<comment type="domain">
    <text evidence="1">Consists of an N-terminal domain, which is sufficient for the localization to the septal ring and is required for cell division, followed by a linker domain, and a C-terminal domain, which forms the translocation motor involved in chromosome segregation. The C-terminal domain can be further subdivided into alpha, beta and gamma subdomains. The alpha and beta subdomains multimerise to produce a hexameric ring, contain the nucleotide binding motif and form the DNA pump. The gamma subdomain is a regulatory subdomain that controls translocation of DNA by recognition of KOPS motifs and interacts with XerD recombinase (By similarity).</text>
</comment>
<comment type="similarity">
    <text evidence="5">Belongs to the FtsK/SpoIIIE/SftA family.</text>
</comment>
<dbReference type="EMBL" id="AE014291">
    <property type="protein sequence ID" value="AAN30788.1"/>
    <property type="molecule type" value="Genomic_DNA"/>
</dbReference>
<dbReference type="EMBL" id="CP002997">
    <property type="protein sequence ID" value="AEM19205.1"/>
    <property type="molecule type" value="Genomic_DNA"/>
</dbReference>
<dbReference type="RefSeq" id="WP_006190925.1">
    <property type="nucleotide sequence ID" value="NZ_KN046804.1"/>
</dbReference>
<dbReference type="SMR" id="Q8FYI0"/>
<dbReference type="GeneID" id="45052846"/>
<dbReference type="KEGG" id="bms:BR1895"/>
<dbReference type="KEGG" id="bsi:BS1330_I1889"/>
<dbReference type="PATRIC" id="fig|204722.21.peg.2531"/>
<dbReference type="HOGENOM" id="CLU_001981_6_1_5"/>
<dbReference type="Proteomes" id="UP000007104">
    <property type="component" value="Chromosome I"/>
</dbReference>
<dbReference type="GO" id="GO:0005886">
    <property type="term" value="C:plasma membrane"/>
    <property type="evidence" value="ECO:0007669"/>
    <property type="project" value="UniProtKB-SubCell"/>
</dbReference>
<dbReference type="GO" id="GO:0005524">
    <property type="term" value="F:ATP binding"/>
    <property type="evidence" value="ECO:0007669"/>
    <property type="project" value="UniProtKB-KW"/>
</dbReference>
<dbReference type="GO" id="GO:0016887">
    <property type="term" value="F:ATP hydrolysis activity"/>
    <property type="evidence" value="ECO:0007669"/>
    <property type="project" value="InterPro"/>
</dbReference>
<dbReference type="GO" id="GO:0003677">
    <property type="term" value="F:DNA binding"/>
    <property type="evidence" value="ECO:0007669"/>
    <property type="project" value="UniProtKB-KW"/>
</dbReference>
<dbReference type="GO" id="GO:0051301">
    <property type="term" value="P:cell division"/>
    <property type="evidence" value="ECO:0007669"/>
    <property type="project" value="UniProtKB-KW"/>
</dbReference>
<dbReference type="GO" id="GO:0007059">
    <property type="term" value="P:chromosome segregation"/>
    <property type="evidence" value="ECO:0007669"/>
    <property type="project" value="UniProtKB-KW"/>
</dbReference>
<dbReference type="CDD" id="cd01127">
    <property type="entry name" value="TrwB_TraG_TraD_VirD4"/>
    <property type="match status" value="1"/>
</dbReference>
<dbReference type="Gene3D" id="3.30.980.40">
    <property type="match status" value="1"/>
</dbReference>
<dbReference type="Gene3D" id="3.40.50.300">
    <property type="entry name" value="P-loop containing nucleotide triphosphate hydrolases"/>
    <property type="match status" value="1"/>
</dbReference>
<dbReference type="Gene3D" id="1.10.10.10">
    <property type="entry name" value="Winged helix-like DNA-binding domain superfamily/Winged helix DNA-binding domain"/>
    <property type="match status" value="1"/>
</dbReference>
<dbReference type="InterPro" id="IPR003593">
    <property type="entry name" value="AAA+_ATPase"/>
</dbReference>
<dbReference type="InterPro" id="IPR050206">
    <property type="entry name" value="FtsK/SpoIIIE/SftA"/>
</dbReference>
<dbReference type="InterPro" id="IPR025199">
    <property type="entry name" value="FtsK_4TM"/>
</dbReference>
<dbReference type="InterPro" id="IPR041027">
    <property type="entry name" value="FtsK_alpha"/>
</dbReference>
<dbReference type="InterPro" id="IPR002543">
    <property type="entry name" value="FtsK_dom"/>
</dbReference>
<dbReference type="InterPro" id="IPR018541">
    <property type="entry name" value="Ftsk_gamma"/>
</dbReference>
<dbReference type="InterPro" id="IPR027417">
    <property type="entry name" value="P-loop_NTPase"/>
</dbReference>
<dbReference type="InterPro" id="IPR036388">
    <property type="entry name" value="WH-like_DNA-bd_sf"/>
</dbReference>
<dbReference type="InterPro" id="IPR036390">
    <property type="entry name" value="WH_DNA-bd_sf"/>
</dbReference>
<dbReference type="PANTHER" id="PTHR22683:SF41">
    <property type="entry name" value="DNA TRANSLOCASE FTSK"/>
    <property type="match status" value="1"/>
</dbReference>
<dbReference type="PANTHER" id="PTHR22683">
    <property type="entry name" value="SPORULATION PROTEIN RELATED"/>
    <property type="match status" value="1"/>
</dbReference>
<dbReference type="Pfam" id="PF13491">
    <property type="entry name" value="FtsK_4TM"/>
    <property type="match status" value="1"/>
</dbReference>
<dbReference type="Pfam" id="PF17854">
    <property type="entry name" value="FtsK_alpha"/>
    <property type="match status" value="1"/>
</dbReference>
<dbReference type="Pfam" id="PF09397">
    <property type="entry name" value="FtsK_gamma"/>
    <property type="match status" value="1"/>
</dbReference>
<dbReference type="Pfam" id="PF01580">
    <property type="entry name" value="FtsK_SpoIIIE"/>
    <property type="match status" value="1"/>
</dbReference>
<dbReference type="SMART" id="SM00382">
    <property type="entry name" value="AAA"/>
    <property type="match status" value="1"/>
</dbReference>
<dbReference type="SMART" id="SM00843">
    <property type="entry name" value="Ftsk_gamma"/>
    <property type="match status" value="1"/>
</dbReference>
<dbReference type="SUPFAM" id="SSF52540">
    <property type="entry name" value="P-loop containing nucleoside triphosphate hydrolases"/>
    <property type="match status" value="1"/>
</dbReference>
<dbReference type="SUPFAM" id="SSF46785">
    <property type="entry name" value="Winged helix' DNA-binding domain"/>
    <property type="match status" value="1"/>
</dbReference>
<dbReference type="PROSITE" id="PS50901">
    <property type="entry name" value="FTSK"/>
    <property type="match status" value="1"/>
</dbReference>
<reference key="1">
    <citation type="journal article" date="2002" name="Proc. Natl. Acad. Sci. U.S.A.">
        <title>The Brucella suis genome reveals fundamental similarities between animal and plant pathogens and symbionts.</title>
        <authorList>
            <person name="Paulsen I.T."/>
            <person name="Seshadri R."/>
            <person name="Nelson K.E."/>
            <person name="Eisen J.A."/>
            <person name="Heidelberg J.F."/>
            <person name="Read T.D."/>
            <person name="Dodson R.J."/>
            <person name="Umayam L.A."/>
            <person name="Brinkac L.M."/>
            <person name="Beanan M.J."/>
            <person name="Daugherty S.C."/>
            <person name="DeBoy R.T."/>
            <person name="Durkin A.S."/>
            <person name="Kolonay J.F."/>
            <person name="Madupu R."/>
            <person name="Nelson W.C."/>
            <person name="Ayodeji B."/>
            <person name="Kraul M."/>
            <person name="Shetty J."/>
            <person name="Malek J.A."/>
            <person name="Van Aken S.E."/>
            <person name="Riedmuller S."/>
            <person name="Tettelin H."/>
            <person name="Gill S.R."/>
            <person name="White O."/>
            <person name="Salzberg S.L."/>
            <person name="Hoover D.L."/>
            <person name="Lindler L.E."/>
            <person name="Halling S.M."/>
            <person name="Boyle S.M."/>
            <person name="Fraser C.M."/>
        </authorList>
    </citation>
    <scope>NUCLEOTIDE SEQUENCE [LARGE SCALE GENOMIC DNA]</scope>
    <source>
        <strain>1330</strain>
    </source>
</reference>
<reference key="2">
    <citation type="journal article" date="2011" name="J. Bacteriol.">
        <title>Revised genome sequence of Brucella suis 1330.</title>
        <authorList>
            <person name="Tae H."/>
            <person name="Shallom S."/>
            <person name="Settlage R."/>
            <person name="Preston D."/>
            <person name="Adams L.G."/>
            <person name="Garner H.R."/>
        </authorList>
    </citation>
    <scope>NUCLEOTIDE SEQUENCE [LARGE SCALE GENOMIC DNA]</scope>
    <source>
        <strain>1330</strain>
    </source>
</reference>